<feature type="chain" id="PRO_0000052064" description="Indoleacetaldoxime dehydratase">
    <location>
        <begin position="1"/>
        <end position="497"/>
    </location>
</feature>
<feature type="transmembrane region" description="Helical" evidence="2">
    <location>
        <begin position="2"/>
        <end position="20"/>
    </location>
</feature>
<feature type="binding site" description="axial binding residue" evidence="1">
    <location>
        <position position="439"/>
    </location>
    <ligand>
        <name>heme</name>
        <dbReference type="ChEBI" id="CHEBI:30413"/>
    </ligand>
    <ligandPart>
        <name>Fe</name>
        <dbReference type="ChEBI" id="CHEBI:18248"/>
    </ligandPart>
</feature>
<sequence length="497" mass="56086">MEMILSISLCLTTLITLLLLRRFLKRTATKVNLPPSPWRLPVIGNLHQLSLHPHRSLRSLSLRYGPLMLLHFGRVPILVVSSGEAAQEVLKTHDHKFANRPRSKAVHGLMNGGRDVVFAPYGEYWRQMKSVCILNLLTNKMVESFEKVREDEVNAMIEKLEKASSSSSSENLSELFITLPSDVTSRVALGRKHSEDETARDLKKRVRQIMELLGEFPIGEYVPILAWIDGIRGFNNKIKEVSRGFSDLMDKVVQEHLEASNDKADFVDILLSIEKDKNSGFQVQRNDIKFMILDMFIGGTSTTSTLLEWTMTELIRSPKSMKKLQDEIRSTIRPHGSYIKEKEVENMKYLKAVIKEVLRLHPSLPMILPRLLSEDVKVKGYNIAAGTEVIINAWAIQRDTAIWGPDAEEFKPERHLDSGLDYHGKNLNYIPFGSGRRICPGINLALGLAEVTVANLVGRFDWRVEAGPNGDQPDLTEAIGIDVCRKFPLIAFPSSVV</sequence>
<gene>
    <name type="primary">CYP71A13</name>
    <name type="ordered locus">At2g30770</name>
    <name type="ORF">T11J7.16</name>
</gene>
<dbReference type="EC" id="4.8.1.3" evidence="3"/>
<dbReference type="EMBL" id="AC002340">
    <property type="protein sequence ID" value="AAC02748.1"/>
    <property type="molecule type" value="Genomic_DNA"/>
</dbReference>
<dbReference type="EMBL" id="CP002685">
    <property type="protein sequence ID" value="AEC08439.2"/>
    <property type="molecule type" value="Genomic_DNA"/>
</dbReference>
<dbReference type="EMBL" id="BX820453">
    <property type="status" value="NOT_ANNOTATED_CDS"/>
    <property type="molecule type" value="mRNA"/>
</dbReference>
<dbReference type="PIR" id="E84712">
    <property type="entry name" value="E84712"/>
</dbReference>
<dbReference type="RefSeq" id="NP_180635.3">
    <property type="nucleotide sequence ID" value="NM_128630.3"/>
</dbReference>
<dbReference type="SMR" id="O49342"/>
<dbReference type="BioGRID" id="2977">
    <property type="interactions" value="1"/>
</dbReference>
<dbReference type="ComplexPortal" id="CPX-2833">
    <property type="entry name" value="Camalexin biosynthetic metabolon complex"/>
</dbReference>
<dbReference type="FunCoup" id="O49342">
    <property type="interactions" value="188"/>
</dbReference>
<dbReference type="IntAct" id="O49342">
    <property type="interactions" value="7"/>
</dbReference>
<dbReference type="STRING" id="3702.O49342"/>
<dbReference type="PaxDb" id="3702-AT2G30770.1"/>
<dbReference type="ProteomicsDB" id="239080"/>
<dbReference type="EnsemblPlants" id="AT2G30770.1">
    <property type="protein sequence ID" value="AT2G30770.1"/>
    <property type="gene ID" value="AT2G30770"/>
</dbReference>
<dbReference type="GeneID" id="817628"/>
<dbReference type="Gramene" id="AT2G30770.1">
    <property type="protein sequence ID" value="AT2G30770.1"/>
    <property type="gene ID" value="AT2G30770"/>
</dbReference>
<dbReference type="KEGG" id="ath:AT2G30770"/>
<dbReference type="Araport" id="AT2G30770"/>
<dbReference type="TAIR" id="AT2G30770">
    <property type="gene designation" value="CYP71A13"/>
</dbReference>
<dbReference type="eggNOG" id="KOG0156">
    <property type="taxonomic scope" value="Eukaryota"/>
</dbReference>
<dbReference type="HOGENOM" id="CLU_001570_4_0_1"/>
<dbReference type="InParanoid" id="O49342"/>
<dbReference type="OMA" id="MEMILMI"/>
<dbReference type="PhylomeDB" id="O49342"/>
<dbReference type="BioCyc" id="ARA:AT2G30770-MONOMER"/>
<dbReference type="BioCyc" id="MetaCyc:AT2G30770-MONOMER"/>
<dbReference type="PRO" id="PR:O49342"/>
<dbReference type="Proteomes" id="UP000006548">
    <property type="component" value="Chromosome 2"/>
</dbReference>
<dbReference type="ExpressionAtlas" id="O49342">
    <property type="expression patterns" value="baseline and differential"/>
</dbReference>
<dbReference type="GO" id="GO:0016020">
    <property type="term" value="C:membrane"/>
    <property type="evidence" value="ECO:0007669"/>
    <property type="project" value="UniProtKB-SubCell"/>
</dbReference>
<dbReference type="GO" id="GO:0020037">
    <property type="term" value="F:heme binding"/>
    <property type="evidence" value="ECO:0007669"/>
    <property type="project" value="InterPro"/>
</dbReference>
<dbReference type="GO" id="GO:0047720">
    <property type="term" value="F:indoleacetaldoxime dehydratase activity"/>
    <property type="evidence" value="ECO:0007669"/>
    <property type="project" value="RHEA"/>
</dbReference>
<dbReference type="GO" id="GO:0005506">
    <property type="term" value="F:iron ion binding"/>
    <property type="evidence" value="ECO:0007669"/>
    <property type="project" value="InterPro"/>
</dbReference>
<dbReference type="GO" id="GO:0004497">
    <property type="term" value="F:monooxygenase activity"/>
    <property type="evidence" value="ECO:0007669"/>
    <property type="project" value="InterPro"/>
</dbReference>
<dbReference type="GO" id="GO:0016705">
    <property type="term" value="F:oxidoreductase activity, acting on paired donors, with incorporation or reduction of molecular oxygen"/>
    <property type="evidence" value="ECO:0007669"/>
    <property type="project" value="InterPro"/>
</dbReference>
<dbReference type="GO" id="GO:0006952">
    <property type="term" value="P:defense response"/>
    <property type="evidence" value="ECO:0007669"/>
    <property type="project" value="UniProtKB-KW"/>
</dbReference>
<dbReference type="CDD" id="cd11072">
    <property type="entry name" value="CYP71-like"/>
    <property type="match status" value="1"/>
</dbReference>
<dbReference type="FunFam" id="1.10.630.10:FF:000011">
    <property type="entry name" value="Cytochrome P450 83B1"/>
    <property type="match status" value="1"/>
</dbReference>
<dbReference type="Gene3D" id="1.10.630.10">
    <property type="entry name" value="Cytochrome P450"/>
    <property type="match status" value="1"/>
</dbReference>
<dbReference type="InterPro" id="IPR001128">
    <property type="entry name" value="Cyt_P450"/>
</dbReference>
<dbReference type="InterPro" id="IPR017972">
    <property type="entry name" value="Cyt_P450_CS"/>
</dbReference>
<dbReference type="InterPro" id="IPR002401">
    <property type="entry name" value="Cyt_P450_E_grp-I"/>
</dbReference>
<dbReference type="InterPro" id="IPR036396">
    <property type="entry name" value="Cyt_P450_sf"/>
</dbReference>
<dbReference type="PANTHER" id="PTHR47955:SF15">
    <property type="entry name" value="CYTOCHROME P450 71A2-LIKE"/>
    <property type="match status" value="1"/>
</dbReference>
<dbReference type="PANTHER" id="PTHR47955">
    <property type="entry name" value="CYTOCHROME P450 FAMILY 71 PROTEIN"/>
    <property type="match status" value="1"/>
</dbReference>
<dbReference type="Pfam" id="PF00067">
    <property type="entry name" value="p450"/>
    <property type="match status" value="1"/>
</dbReference>
<dbReference type="PRINTS" id="PR00463">
    <property type="entry name" value="EP450I"/>
</dbReference>
<dbReference type="PRINTS" id="PR00385">
    <property type="entry name" value="P450"/>
</dbReference>
<dbReference type="SUPFAM" id="SSF48264">
    <property type="entry name" value="Cytochrome P450"/>
    <property type="match status" value="1"/>
</dbReference>
<dbReference type="PROSITE" id="PS00086">
    <property type="entry name" value="CYTOCHROME_P450"/>
    <property type="match status" value="1"/>
</dbReference>
<evidence type="ECO:0000250" key="1">
    <source>
        <dbReference type="UniProtKB" id="Q96242"/>
    </source>
</evidence>
<evidence type="ECO:0000255" key="2"/>
<evidence type="ECO:0000269" key="3">
    <source>
    </source>
</evidence>
<evidence type="ECO:0000269" key="4">
    <source>
    </source>
</evidence>
<evidence type="ECO:0000269" key="5">
    <source>
    </source>
</evidence>
<evidence type="ECO:0000269" key="6">
    <source>
    </source>
</evidence>
<evidence type="ECO:0000269" key="7">
    <source>
    </source>
</evidence>
<evidence type="ECO:0000305" key="8"/>
<reference key="1">
    <citation type="journal article" date="1999" name="Nature">
        <title>Sequence and analysis of chromosome 2 of the plant Arabidopsis thaliana.</title>
        <authorList>
            <person name="Lin X."/>
            <person name="Kaul S."/>
            <person name="Rounsley S.D."/>
            <person name="Shea T.P."/>
            <person name="Benito M.-I."/>
            <person name="Town C.D."/>
            <person name="Fujii C.Y."/>
            <person name="Mason T.M."/>
            <person name="Bowman C.L."/>
            <person name="Barnstead M.E."/>
            <person name="Feldblyum T.V."/>
            <person name="Buell C.R."/>
            <person name="Ketchum K.A."/>
            <person name="Lee J.J."/>
            <person name="Ronning C.M."/>
            <person name="Koo H.L."/>
            <person name="Moffat K.S."/>
            <person name="Cronin L.A."/>
            <person name="Shen M."/>
            <person name="Pai G."/>
            <person name="Van Aken S."/>
            <person name="Umayam L."/>
            <person name="Tallon L.J."/>
            <person name="Gill J.E."/>
            <person name="Adams M.D."/>
            <person name="Carrera A.J."/>
            <person name="Creasy T.H."/>
            <person name="Goodman H.M."/>
            <person name="Somerville C.R."/>
            <person name="Copenhaver G.P."/>
            <person name="Preuss D."/>
            <person name="Nierman W.C."/>
            <person name="White O."/>
            <person name="Eisen J.A."/>
            <person name="Salzberg S.L."/>
            <person name="Fraser C.M."/>
            <person name="Venter J.C."/>
        </authorList>
    </citation>
    <scope>NUCLEOTIDE SEQUENCE [LARGE SCALE GENOMIC DNA]</scope>
    <source>
        <strain>cv. Columbia</strain>
    </source>
</reference>
<reference key="2">
    <citation type="journal article" date="2017" name="Plant J.">
        <title>Araport11: a complete reannotation of the Arabidopsis thaliana reference genome.</title>
        <authorList>
            <person name="Cheng C.Y."/>
            <person name="Krishnakumar V."/>
            <person name="Chan A.P."/>
            <person name="Thibaud-Nissen F."/>
            <person name="Schobel S."/>
            <person name="Town C.D."/>
        </authorList>
    </citation>
    <scope>GENOME REANNOTATION</scope>
    <source>
        <strain>cv. Columbia</strain>
    </source>
</reference>
<reference key="3">
    <citation type="journal article" date="2004" name="Genome Res.">
        <title>Whole genome sequence comparisons and 'full-length' cDNA sequences: a combined approach to evaluate and improve Arabidopsis genome annotation.</title>
        <authorList>
            <person name="Castelli V."/>
            <person name="Aury J.-M."/>
            <person name="Jaillon O."/>
            <person name="Wincker P."/>
            <person name="Clepet C."/>
            <person name="Menard M."/>
            <person name="Cruaud C."/>
            <person name="Quetier F."/>
            <person name="Scarpelli C."/>
            <person name="Schaechter V."/>
            <person name="Temple G."/>
            <person name="Caboche M."/>
            <person name="Weissenbach J."/>
            <person name="Salanoubat M."/>
        </authorList>
    </citation>
    <scope>NUCLEOTIDE SEQUENCE [LARGE SCALE MRNA]</scope>
    <source>
        <strain>cv. Columbia</strain>
    </source>
</reference>
<reference key="4">
    <citation type="journal article" date="2007" name="Plant Cell">
        <title>Arabidopsis cytochrome P450 monooxygenase 71A13 catalyzes the conversion of indole-3-acetaldoxime in camalexin synthesis.</title>
        <authorList>
            <person name="Nafisi M."/>
            <person name="Goregaoker S."/>
            <person name="Botanga C.J."/>
            <person name="Glawischnig E."/>
            <person name="Olsen C.E."/>
            <person name="Halkier B.A."/>
            <person name="Glazebrook J."/>
        </authorList>
    </citation>
    <scope>FUNCTION</scope>
    <scope>CATALYTIC ACTIVITY</scope>
</reference>
<reference key="5">
    <citation type="journal article" date="2008" name="EMBO J.">
        <title>Arabidopsis MAP kinase 4 regulates gene expression through transcription factor release in the nucleus.</title>
        <authorList>
            <person name="Qiu J.L."/>
            <person name="Fiil B.K."/>
            <person name="Petersen K."/>
            <person name="Nielsen H.B."/>
            <person name="Botanga C.J."/>
            <person name="Thorgrimsen S."/>
            <person name="Palma K."/>
            <person name="Suarez-Rodriguez M.C."/>
            <person name="Sandbech-Clausen S."/>
            <person name="Lichota J."/>
            <person name="Brodersen P."/>
            <person name="Grasser K.D."/>
            <person name="Mattsson O."/>
            <person name="Glazebrook J."/>
            <person name="Mundy J."/>
            <person name="Petersen M."/>
        </authorList>
    </citation>
    <scope>INDUCTION</scope>
</reference>
<reference key="6">
    <citation type="journal article" date="2008" name="Plant Physiol.">
        <title>Glycerol-3-phosphate levels are associated with basal resistance to the hemibiotrophic fungus Colletotrichum higginsianum in Arabidopsis.</title>
        <authorList>
            <person name="Chanda B."/>
            <person name="Venugopal S.C."/>
            <person name="Kulshrestha S."/>
            <person name="Navarre D.A."/>
            <person name="Downie B."/>
            <person name="Vaillancourt L."/>
            <person name="Kachroo A."/>
            <person name="Kachroo P."/>
        </authorList>
    </citation>
    <scope>INDUCTION</scope>
</reference>
<reference key="7">
    <citation type="journal article" date="2009" name="Plant J.">
        <title>The ABC transporter BcatrB from Botrytis cinerea exports camalexin and is a virulence factor on Arabidopsis thaliana.</title>
        <authorList>
            <person name="Stefanato F.L."/>
            <person name="Abou-Mansour E."/>
            <person name="Buchala A."/>
            <person name="Kretschmer M."/>
            <person name="Mosbach A."/>
            <person name="Hahn M."/>
            <person name="Bochet C.G."/>
            <person name="Metraux J.P."/>
            <person name="Schoonbeek H.J."/>
        </authorList>
    </citation>
    <scope>FUNCTION</scope>
    <scope>INDUCTION</scope>
</reference>
<reference key="8">
    <citation type="journal article" date="2010" name="Plant J.">
        <title>Transcriptional reprogramming regulated by WRKY18 and WRKY40 facilitates powdery mildew infection of Arabidopsis.</title>
        <authorList>
            <person name="Pandey S.P."/>
            <person name="Roccaro M."/>
            <person name="Schoen M."/>
            <person name="Logemann E."/>
            <person name="Somssich I.E."/>
        </authorList>
    </citation>
    <scope>INDUCTION</scope>
</reference>
<accession>O49342</accession>
<accession>F4INY1</accession>
<keyword id="KW-0408">Iron</keyword>
<keyword id="KW-0456">Lyase</keyword>
<keyword id="KW-0472">Membrane</keyword>
<keyword id="KW-0479">Metal-binding</keyword>
<keyword id="KW-0611">Plant defense</keyword>
<keyword id="KW-1185">Reference proteome</keyword>
<keyword id="KW-0812">Transmembrane</keyword>
<keyword id="KW-1133">Transmembrane helix</keyword>
<organism>
    <name type="scientific">Arabidopsis thaliana</name>
    <name type="common">Mouse-ear cress</name>
    <dbReference type="NCBI Taxonomy" id="3702"/>
    <lineage>
        <taxon>Eukaryota</taxon>
        <taxon>Viridiplantae</taxon>
        <taxon>Streptophyta</taxon>
        <taxon>Embryophyta</taxon>
        <taxon>Tracheophyta</taxon>
        <taxon>Spermatophyta</taxon>
        <taxon>Magnoliopsida</taxon>
        <taxon>eudicotyledons</taxon>
        <taxon>Gunneridae</taxon>
        <taxon>Pentapetalae</taxon>
        <taxon>rosids</taxon>
        <taxon>malvids</taxon>
        <taxon>Brassicales</taxon>
        <taxon>Brassicaceae</taxon>
        <taxon>Camelineae</taxon>
        <taxon>Arabidopsis</taxon>
    </lineage>
</organism>
<name>C71AD_ARATH</name>
<proteinExistence type="evidence at protein level"/>
<protein>
    <recommendedName>
        <fullName>Indoleacetaldoxime dehydratase</fullName>
        <ecNumber evidence="3">4.8.1.3</ecNumber>
    </recommendedName>
    <alternativeName>
        <fullName>Cytochrome P450 71A13</fullName>
    </alternativeName>
</protein>
<comment type="function">
    <text evidence="3 6">Involved in the biosynthesis of the indole-derived phytoalexin camalexin. Catalyzes the conversion of indole-3-acetaldoxime to indole-3-acetonitrile. Required for resistance to A.brassicicola and B.cinerea.</text>
</comment>
<comment type="catalytic activity">
    <reaction evidence="3">
        <text>(E)-(indol-3-yl)acetaldehyde oxime = (indol-3-yl)acetonitrile + H2O</text>
        <dbReference type="Rhea" id="RHEA:23156"/>
        <dbReference type="ChEBI" id="CHEBI:15377"/>
        <dbReference type="ChEBI" id="CHEBI:17545"/>
        <dbReference type="ChEBI" id="CHEBI:17566"/>
        <dbReference type="EC" id="4.8.1.3"/>
    </reaction>
</comment>
<comment type="interaction">
    <interactant intactId="EBI-2356153">
        <id>O49342</id>
    </interactant>
    <interactant intactId="EBI-16915951">
        <id>Q9LW27</id>
        <label>CYP71B15</label>
    </interactant>
    <organismsDiffer>false</organismsDiffer>
    <experiments>5</experiments>
</comment>
<comment type="interaction">
    <interactant intactId="EBI-2356153">
        <id>O49342</id>
    </interactant>
    <interactant intactId="EBI-30856456">
        <id>Q9ZW27</id>
        <label>GSTU4</label>
    </interactant>
    <organismsDiffer>false</organismsDiffer>
    <experiments>3</experiments>
</comment>
<comment type="subcellular location">
    <subcellularLocation>
        <location evidence="8">Membrane</location>
        <topology evidence="8">Single-pass membrane protein</topology>
    </subcellularLocation>
</comment>
<comment type="induction">
    <text evidence="4 5 6 7">By Pseudomonas syringae pv. tomato DC3000, Botrytis cinerea, flagellin, BTH and UV-C. Repressed by the transcription factors WRKY18 and WRKY40 upon infection with Golovinomyces orontii.</text>
</comment>
<comment type="similarity">
    <text evidence="8">Belongs to the cytochrome P450 family.</text>
</comment>